<name>NTP1_HAEPV</name>
<gene>
    <name type="primary">NPH1</name>
    <name type="ORF">F1L</name>
</gene>
<proteinExistence type="inferred from homology"/>
<dbReference type="EC" id="3.6.1.15"/>
<dbReference type="EMBL" id="AF019224">
    <property type="protein sequence ID" value="AAB96624.1"/>
    <property type="molecule type" value="Genomic_DNA"/>
</dbReference>
<dbReference type="SMR" id="O37319"/>
<dbReference type="GO" id="GO:0044423">
    <property type="term" value="C:virion component"/>
    <property type="evidence" value="ECO:0007669"/>
    <property type="project" value="UniProtKB-KW"/>
</dbReference>
<dbReference type="GO" id="GO:0005524">
    <property type="term" value="F:ATP binding"/>
    <property type="evidence" value="ECO:0007669"/>
    <property type="project" value="UniProtKB-KW"/>
</dbReference>
<dbReference type="GO" id="GO:0003677">
    <property type="term" value="F:DNA binding"/>
    <property type="evidence" value="ECO:0007669"/>
    <property type="project" value="UniProtKB-KW"/>
</dbReference>
<dbReference type="GO" id="GO:0017111">
    <property type="term" value="F:ribonucleoside triphosphate phosphatase activity"/>
    <property type="evidence" value="ECO:0007669"/>
    <property type="project" value="UniProtKB-EC"/>
</dbReference>
<dbReference type="GO" id="GO:0006351">
    <property type="term" value="P:DNA-templated transcription"/>
    <property type="evidence" value="ECO:0007669"/>
    <property type="project" value="InterPro"/>
</dbReference>
<dbReference type="Gene3D" id="3.40.50.300">
    <property type="entry name" value="P-loop containing nucleotide triphosphate hydrolases"/>
    <property type="match status" value="2"/>
</dbReference>
<dbReference type="InterPro" id="IPR014001">
    <property type="entry name" value="Helicase_ATP-bd"/>
</dbReference>
<dbReference type="InterPro" id="IPR001650">
    <property type="entry name" value="Helicase_C-like"/>
</dbReference>
<dbReference type="InterPro" id="IPR013676">
    <property type="entry name" value="NPHI_C"/>
</dbReference>
<dbReference type="InterPro" id="IPR027417">
    <property type="entry name" value="P-loop_NTPase"/>
</dbReference>
<dbReference type="InterPro" id="IPR000330">
    <property type="entry name" value="SNF2_N"/>
</dbReference>
<dbReference type="PANTHER" id="PTHR10799">
    <property type="entry name" value="SNF2/RAD54 HELICASE FAMILY"/>
    <property type="match status" value="1"/>
</dbReference>
<dbReference type="Pfam" id="PF00271">
    <property type="entry name" value="Helicase_C"/>
    <property type="match status" value="1"/>
</dbReference>
<dbReference type="Pfam" id="PF08469">
    <property type="entry name" value="NPHI_C"/>
    <property type="match status" value="1"/>
</dbReference>
<dbReference type="Pfam" id="PF00176">
    <property type="entry name" value="SNF2-rel_dom"/>
    <property type="match status" value="1"/>
</dbReference>
<dbReference type="SMART" id="SM00487">
    <property type="entry name" value="DEXDc"/>
    <property type="match status" value="1"/>
</dbReference>
<dbReference type="SMART" id="SM00490">
    <property type="entry name" value="HELICc"/>
    <property type="match status" value="1"/>
</dbReference>
<dbReference type="SUPFAM" id="SSF52540">
    <property type="entry name" value="P-loop containing nucleoside triphosphate hydrolases"/>
    <property type="match status" value="2"/>
</dbReference>
<dbReference type="PROSITE" id="PS51192">
    <property type="entry name" value="HELICASE_ATP_BIND_1"/>
    <property type="match status" value="1"/>
</dbReference>
<dbReference type="PROSITE" id="PS51194">
    <property type="entry name" value="HELICASE_CTER"/>
    <property type="match status" value="1"/>
</dbReference>
<organism>
    <name type="scientific">Heliothis armigera entomopoxvirus</name>
    <name type="common">HaEPV</name>
    <dbReference type="NCBI Taxonomy" id="10290"/>
    <lineage>
        <taxon>Viruses</taxon>
        <taxon>Varidnaviria</taxon>
        <taxon>Bamfordvirae</taxon>
        <taxon>Nucleocytoviricota</taxon>
        <taxon>Pokkesviricetes</taxon>
        <taxon>Chitovirales</taxon>
        <taxon>Poxviridae</taxon>
        <taxon>Entomopoxvirinae</taxon>
        <taxon>Betaentomopoxvirus</taxon>
    </lineage>
</organism>
<evidence type="ECO:0000250" key="1"/>
<evidence type="ECO:0000255" key="2">
    <source>
        <dbReference type="PROSITE-ProRule" id="PRU00541"/>
    </source>
</evidence>
<evidence type="ECO:0000255" key="3">
    <source>
        <dbReference type="PROSITE-ProRule" id="PRU00542"/>
    </source>
</evidence>
<evidence type="ECO:0000305" key="4"/>
<keyword id="KW-0067">ATP-binding</keyword>
<keyword id="KW-0238">DNA-binding</keyword>
<keyword id="KW-0378">Hydrolase</keyword>
<keyword id="KW-0547">Nucleotide-binding</keyword>
<keyword id="KW-0804">Transcription</keyword>
<keyword id="KW-0946">Virion</keyword>
<reference key="1">
    <citation type="journal article" date="1997" name="J. Gen. Virol.">
        <title>Mapping of the Heliothis armigera entomopoxvirus (HaEPV) genome, and analysis of genes encoding the HaEPV spheroidin and nucleoside triphosphate phosphohydrolase I proteins.</title>
        <authorList>
            <person name="Sriskantha A."/>
            <person name="Osborne R.J."/>
            <person name="Dall D.J."/>
        </authorList>
    </citation>
    <scope>NUCLEOTIDE SEQUENCE [GENOMIC DNA]</scope>
</reference>
<comment type="function">
    <text evidence="1">DNA-dependent ATPase required for providing the needed energy to achieve the termination of early transcripts. Acts in concert with the RAP94 subunit of the virion RNA polymerase and the capping enzyme/VTF to catalyze release of UUUUUNU-containing nascent RNA from the elongation complex. NPH-I must bind ssDNA in order to exhibit ATPase activity (By similarity).</text>
</comment>
<comment type="catalytic activity">
    <reaction>
        <text>a ribonucleoside 5'-triphosphate + H2O = a ribonucleoside 5'-diphosphate + phosphate + H(+)</text>
        <dbReference type="Rhea" id="RHEA:23680"/>
        <dbReference type="ChEBI" id="CHEBI:15377"/>
        <dbReference type="ChEBI" id="CHEBI:15378"/>
        <dbReference type="ChEBI" id="CHEBI:43474"/>
        <dbReference type="ChEBI" id="CHEBI:57930"/>
        <dbReference type="ChEBI" id="CHEBI:61557"/>
        <dbReference type="EC" id="3.6.1.15"/>
    </reaction>
</comment>
<comment type="subunit">
    <text evidence="1">Monomer. Interacts (via C-terminus) with RAP94 (via N-terminus). Interacts with the cap-specific mRNA (nucleoside-2'-O-)-methyltransferase (By similarity).</text>
</comment>
<comment type="subcellular location">
    <subcellularLocation>
        <location evidence="1">Virion</location>
    </subcellularLocation>
    <text evidence="1">Virion core enzyme.</text>
</comment>
<comment type="similarity">
    <text evidence="4">Belongs to the helicase family. NPH I subfamily.</text>
</comment>
<protein>
    <recommendedName>
        <fullName>Nucleoside triphosphatase I</fullName>
        <ecNumber>3.6.1.15</ecNumber>
    </recommendedName>
    <alternativeName>
        <fullName>NPH-I</fullName>
    </alternativeName>
    <alternativeName>
        <fullName>Nucleoside triphosphate phosphohydrolase I</fullName>
        <shortName>NPH I</shortName>
    </alternativeName>
</protein>
<accession>O37319</accession>
<sequence length="646" mass="75763">MFTLDSIVGAHINYALDKTAHLPETITNNVSNVEITLKDYQYFVSRVFIGLKNLNSMLLFWDTGMGKTLTAVYIIKHIKELFPRWIILIFIKKSLYIDPWLNTIRAFAPDISNNIIFVYYDSSSSLDKFVNIYRSIENSLNKKNRLLIIIDEVHKLISRSVKKDNSERNFTPTYKKLIKLANYEGNKILCMSATPIYNNIDEFNNLIGLLRPNVMTFKEEYIINGKLINFKEIRDTLLGLCSYKRLIEADSFTETNYVEGYAKKNVIYHNIIMSEEQSKLFNLAEKYDYKTELGGLKTMRRLVSSFAFYDLKIKGDLNNIEYNDMIKRKLAEFSEFTKTINFSNNFIEKFKRDDLKNDILLEDINNYNILYQYSCKYIEACRIILNSRGKVLLFEPLVNFEGIASLKYYFNCFNITYVEYSSKTLKTRDIEISEYNNYENNDGKNIKVCIFSYAGSEGISFKCVNDIIILDMPWNESELKQIMGRSIRLNSHNDLPLENRYVNVHFIISYTNNRKSVDKEILDIIKDKQSKINVVFDLLKSISIESIHNIHKYIEPVESETIFDTIRKTRMREMNISNVIVKIKLYPIMYCKDYDRATILKGLLNKENNIIYNEDTAVAKLTIENNKPVFIIVDDNLIYIADDYYE</sequence>
<feature type="chain" id="PRO_0000099102" description="Nucleoside triphosphatase I">
    <location>
        <begin position="1"/>
        <end position="646"/>
    </location>
</feature>
<feature type="domain" description="Helicase ATP-binding" evidence="2">
    <location>
        <begin position="48"/>
        <end position="213"/>
    </location>
</feature>
<feature type="domain" description="Helicase C-terminal" evidence="3">
    <location>
        <begin position="377"/>
        <end position="540"/>
    </location>
</feature>
<feature type="region of interest" description="Binding to the cap-specific mRNA (nucleoside-2'-O-)-methyltransferase" evidence="1">
    <location>
        <begin position="466"/>
        <end position="532"/>
    </location>
</feature>
<feature type="short sequence motif" description="DEXH box">
    <location>
        <begin position="151"/>
        <end position="154"/>
    </location>
</feature>
<feature type="binding site" evidence="2">
    <location>
        <begin position="61"/>
        <end position="68"/>
    </location>
    <ligand>
        <name>ATP</name>
        <dbReference type="ChEBI" id="CHEBI:30616"/>
    </ligand>
</feature>
<organismHost>
    <name type="scientific">Lepidoptera</name>
    <name type="common">butterflies and moths</name>
    <dbReference type="NCBI Taxonomy" id="7088"/>
</organismHost>